<dbReference type="EMBL" id="AE017143">
    <property type="protein sequence ID" value="AAP95735.1"/>
    <property type="molecule type" value="Genomic_DNA"/>
</dbReference>
<dbReference type="RefSeq" id="WP_010944785.1">
    <property type="nucleotide sequence ID" value="NC_002940.2"/>
</dbReference>
<dbReference type="SMR" id="Q7VMW7"/>
<dbReference type="STRING" id="233412.HD_0843"/>
<dbReference type="KEGG" id="hdu:HD_0843"/>
<dbReference type="eggNOG" id="COG1281">
    <property type="taxonomic scope" value="Bacteria"/>
</dbReference>
<dbReference type="HOGENOM" id="CLU_054493_0_0_6"/>
<dbReference type="OrthoDB" id="9793753at2"/>
<dbReference type="Proteomes" id="UP000001022">
    <property type="component" value="Chromosome"/>
</dbReference>
<dbReference type="GO" id="GO:0005737">
    <property type="term" value="C:cytoplasm"/>
    <property type="evidence" value="ECO:0007669"/>
    <property type="project" value="UniProtKB-SubCell"/>
</dbReference>
<dbReference type="GO" id="GO:0044183">
    <property type="term" value="F:protein folding chaperone"/>
    <property type="evidence" value="ECO:0007669"/>
    <property type="project" value="TreeGrafter"/>
</dbReference>
<dbReference type="GO" id="GO:0051082">
    <property type="term" value="F:unfolded protein binding"/>
    <property type="evidence" value="ECO:0007669"/>
    <property type="project" value="UniProtKB-UniRule"/>
</dbReference>
<dbReference type="GO" id="GO:0042026">
    <property type="term" value="P:protein refolding"/>
    <property type="evidence" value="ECO:0007669"/>
    <property type="project" value="TreeGrafter"/>
</dbReference>
<dbReference type="CDD" id="cd00498">
    <property type="entry name" value="Hsp33"/>
    <property type="match status" value="1"/>
</dbReference>
<dbReference type="Gene3D" id="1.10.287.480">
    <property type="entry name" value="helix hairpin bin"/>
    <property type="match status" value="1"/>
</dbReference>
<dbReference type="Gene3D" id="3.55.30.10">
    <property type="entry name" value="Hsp33 domain"/>
    <property type="match status" value="1"/>
</dbReference>
<dbReference type="Gene3D" id="3.90.1280.10">
    <property type="entry name" value="HSP33 redox switch-like"/>
    <property type="match status" value="1"/>
</dbReference>
<dbReference type="HAMAP" id="MF_00117">
    <property type="entry name" value="HslO"/>
    <property type="match status" value="1"/>
</dbReference>
<dbReference type="InterPro" id="IPR000397">
    <property type="entry name" value="Heat_shock_Hsp33"/>
</dbReference>
<dbReference type="InterPro" id="IPR016154">
    <property type="entry name" value="Heat_shock_Hsp33_C"/>
</dbReference>
<dbReference type="InterPro" id="IPR016153">
    <property type="entry name" value="Heat_shock_Hsp33_N"/>
</dbReference>
<dbReference type="InterPro" id="IPR023212">
    <property type="entry name" value="Hsp33_helix_hairpin_bin_dom_sf"/>
</dbReference>
<dbReference type="NCBIfam" id="NF001033">
    <property type="entry name" value="PRK00114.1"/>
    <property type="match status" value="1"/>
</dbReference>
<dbReference type="PANTHER" id="PTHR30111">
    <property type="entry name" value="33 KDA CHAPERONIN"/>
    <property type="match status" value="1"/>
</dbReference>
<dbReference type="PANTHER" id="PTHR30111:SF1">
    <property type="entry name" value="33 KDA CHAPERONIN"/>
    <property type="match status" value="1"/>
</dbReference>
<dbReference type="Pfam" id="PF01430">
    <property type="entry name" value="HSP33"/>
    <property type="match status" value="1"/>
</dbReference>
<dbReference type="PIRSF" id="PIRSF005261">
    <property type="entry name" value="Heat_shock_Hsp33"/>
    <property type="match status" value="1"/>
</dbReference>
<dbReference type="SUPFAM" id="SSF64397">
    <property type="entry name" value="Hsp33 domain"/>
    <property type="match status" value="1"/>
</dbReference>
<dbReference type="SUPFAM" id="SSF118352">
    <property type="entry name" value="HSP33 redox switch-like"/>
    <property type="match status" value="1"/>
</dbReference>
<evidence type="ECO:0000255" key="1">
    <source>
        <dbReference type="HAMAP-Rule" id="MF_00117"/>
    </source>
</evidence>
<accession>Q7VMW7</accession>
<keyword id="KW-0143">Chaperone</keyword>
<keyword id="KW-0963">Cytoplasm</keyword>
<keyword id="KW-1015">Disulfide bond</keyword>
<keyword id="KW-0676">Redox-active center</keyword>
<keyword id="KW-1185">Reference proteome</keyword>
<keyword id="KW-0862">Zinc</keyword>
<proteinExistence type="inferred from homology"/>
<reference key="1">
    <citation type="submission" date="2003-06" db="EMBL/GenBank/DDBJ databases">
        <title>The complete genome sequence of Haemophilus ducreyi.</title>
        <authorList>
            <person name="Munson R.S. Jr."/>
            <person name="Ray W.C."/>
            <person name="Mahairas G."/>
            <person name="Sabo P."/>
            <person name="Mungur R."/>
            <person name="Johnson L."/>
            <person name="Nguyen D."/>
            <person name="Wang J."/>
            <person name="Forst C."/>
            <person name="Hood L."/>
        </authorList>
    </citation>
    <scope>NUCLEOTIDE SEQUENCE [LARGE SCALE GENOMIC DNA]</scope>
    <source>
        <strain>35000HP / ATCC 700724</strain>
    </source>
</reference>
<name>HSLO_HAEDU</name>
<gene>
    <name evidence="1" type="primary">hslO</name>
    <name type="ordered locus">HD_0843</name>
</gene>
<protein>
    <recommendedName>
        <fullName evidence="1">33 kDa chaperonin</fullName>
    </recommendedName>
    <alternativeName>
        <fullName evidence="1">Heat shock protein 33 homolog</fullName>
        <shortName evidence="1">HSP33</shortName>
    </alternativeName>
</protein>
<sequence>MQHIQDNDKLYRYLFQHRAVRGEWVRLNETFSQTLNTHQYPKAVQHLLGEMLVATSLLTAIMKFEGNITVQIQGDGPLKLAVVNGNEKQQLRALARVQAEIDDQASLAEMVGNGVLVISIIPTEGERYQGVIQLDKPTIRECLEDYFIRSEQLQTHLIIRVGEYAGQAVAAGMLLQIMPDGTGTPEDFEHLMTLAETVKDEELFGLTAEALLYRLFHQEQVEVYPAQTTAFKCGCSRERSGQAMLLLPMAEIEEMLAEKKGVIDMQCECCGTQYFFDKPAIMLLKEEAAKLADLGLT</sequence>
<organism>
    <name type="scientific">Haemophilus ducreyi (strain 35000HP / ATCC 700724)</name>
    <dbReference type="NCBI Taxonomy" id="233412"/>
    <lineage>
        <taxon>Bacteria</taxon>
        <taxon>Pseudomonadati</taxon>
        <taxon>Pseudomonadota</taxon>
        <taxon>Gammaproteobacteria</taxon>
        <taxon>Pasteurellales</taxon>
        <taxon>Pasteurellaceae</taxon>
        <taxon>Haemophilus</taxon>
    </lineage>
</organism>
<feature type="chain" id="PRO_0000192179" description="33 kDa chaperonin">
    <location>
        <begin position="1"/>
        <end position="297"/>
    </location>
</feature>
<feature type="disulfide bond" description="Redox-active" evidence="1">
    <location>
        <begin position="233"/>
        <end position="235"/>
    </location>
</feature>
<feature type="disulfide bond" description="Redox-active" evidence="1">
    <location>
        <begin position="267"/>
        <end position="270"/>
    </location>
</feature>
<comment type="function">
    <text evidence="1">Redox regulated molecular chaperone. Protects both thermally unfolding and oxidatively damaged proteins from irreversible aggregation. Plays an important role in the bacterial defense system toward oxidative stress.</text>
</comment>
<comment type="subcellular location">
    <subcellularLocation>
        <location evidence="1">Cytoplasm</location>
    </subcellularLocation>
</comment>
<comment type="PTM">
    <text evidence="1">Under oxidizing conditions two disulfide bonds are formed involving the reactive cysteines. Under reducing conditions zinc is bound to the reactive cysteines and the protein is inactive.</text>
</comment>
<comment type="similarity">
    <text evidence="1">Belongs to the HSP33 family.</text>
</comment>